<proteinExistence type="inferred from homology"/>
<gene>
    <name type="ordered locus">SH1739</name>
</gene>
<organism>
    <name type="scientific">Staphylococcus haemolyticus (strain JCSC1435)</name>
    <dbReference type="NCBI Taxonomy" id="279808"/>
    <lineage>
        <taxon>Bacteria</taxon>
        <taxon>Bacillati</taxon>
        <taxon>Bacillota</taxon>
        <taxon>Bacilli</taxon>
        <taxon>Bacillales</taxon>
        <taxon>Staphylococcaceae</taxon>
        <taxon>Staphylococcus</taxon>
    </lineage>
</organism>
<name>Y1739_STAHJ</name>
<dbReference type="EC" id="2.3.1.-" evidence="1"/>
<dbReference type="EMBL" id="AP006716">
    <property type="protein sequence ID" value="BAE05048.1"/>
    <property type="molecule type" value="Genomic_DNA"/>
</dbReference>
<dbReference type="RefSeq" id="WP_011276024.1">
    <property type="nucleotide sequence ID" value="NC_007168.1"/>
</dbReference>
<dbReference type="SMR" id="Q4L5M7"/>
<dbReference type="KEGG" id="sha:SH1739"/>
<dbReference type="eggNOG" id="COG0454">
    <property type="taxonomic scope" value="Bacteria"/>
</dbReference>
<dbReference type="HOGENOM" id="CLU_136634_0_0_9"/>
<dbReference type="OrthoDB" id="2242710at2"/>
<dbReference type="Proteomes" id="UP000000543">
    <property type="component" value="Chromosome"/>
</dbReference>
<dbReference type="GO" id="GO:0016747">
    <property type="term" value="F:acyltransferase activity, transferring groups other than amino-acyl groups"/>
    <property type="evidence" value="ECO:0007669"/>
    <property type="project" value="UniProtKB-UniRule"/>
</dbReference>
<dbReference type="Gene3D" id="3.40.630.30">
    <property type="match status" value="1"/>
</dbReference>
<dbReference type="HAMAP" id="MF_00824">
    <property type="entry name" value="Acetyltransf_YlbP"/>
    <property type="match status" value="1"/>
</dbReference>
<dbReference type="InterPro" id="IPR016181">
    <property type="entry name" value="Acyl_CoA_acyltransferase"/>
</dbReference>
<dbReference type="InterPro" id="IPR017274">
    <property type="entry name" value="YlbP"/>
</dbReference>
<dbReference type="NCBIfam" id="NF010241">
    <property type="entry name" value="PRK13688.1"/>
    <property type="match status" value="1"/>
</dbReference>
<dbReference type="PIRSF" id="PIRSF037732">
    <property type="entry name" value="YlbP_prd"/>
    <property type="match status" value="1"/>
</dbReference>
<dbReference type="SUPFAM" id="SSF55729">
    <property type="entry name" value="Acyl-CoA N-acyltransferases (Nat)"/>
    <property type="match status" value="1"/>
</dbReference>
<protein>
    <recommendedName>
        <fullName evidence="1">Uncharacterized N-acetyltransferase SH1739</fullName>
        <ecNumber evidence="1">2.3.1.-</ecNumber>
    </recommendedName>
</protein>
<accession>Q4L5M7</accession>
<reference key="1">
    <citation type="journal article" date="2005" name="J. Bacteriol.">
        <title>Whole-genome sequencing of Staphylococcus haemolyticus uncovers the extreme plasticity of its genome and the evolution of human-colonizing staphylococcal species.</title>
        <authorList>
            <person name="Takeuchi F."/>
            <person name="Watanabe S."/>
            <person name="Baba T."/>
            <person name="Yuzawa H."/>
            <person name="Ito T."/>
            <person name="Morimoto Y."/>
            <person name="Kuroda M."/>
            <person name="Cui L."/>
            <person name="Takahashi M."/>
            <person name="Ankai A."/>
            <person name="Baba S."/>
            <person name="Fukui S."/>
            <person name="Lee J.C."/>
            <person name="Hiramatsu K."/>
        </authorList>
    </citation>
    <scope>NUCLEOTIDE SEQUENCE [LARGE SCALE GENOMIC DNA]</scope>
    <source>
        <strain>JCSC1435</strain>
    </source>
</reference>
<feature type="chain" id="PRO_0000232490" description="Uncharacterized N-acetyltransferase SH1739">
    <location>
        <begin position="1"/>
        <end position="147"/>
    </location>
</feature>
<feature type="domain" description="N-acetyltransferase" evidence="1">
    <location>
        <begin position="7"/>
        <end position="147"/>
    </location>
</feature>
<keyword id="KW-0012">Acyltransferase</keyword>
<keyword id="KW-0808">Transferase</keyword>
<sequence length="147" mass="17228">MSEVKHLEINYKTDELFEAFREFGNKDLYMVEELQGQMIDASSESPFYGIFHGENLVARMALLKKGDVEEIYFPEFDDYLLLWKLEVLDNYKNKGYGQSLIDYAKSYNMPIKAIARQNSKEFLMNQDFEDVHAKNPEGHDVLVWAPK</sequence>
<evidence type="ECO:0000255" key="1">
    <source>
        <dbReference type="HAMAP-Rule" id="MF_00824"/>
    </source>
</evidence>